<name>IF2_MYCGI</name>
<evidence type="ECO:0000250" key="1"/>
<evidence type="ECO:0000255" key="2">
    <source>
        <dbReference type="HAMAP-Rule" id="MF_00100"/>
    </source>
</evidence>
<evidence type="ECO:0000256" key="3">
    <source>
        <dbReference type="SAM" id="MobiDB-lite"/>
    </source>
</evidence>
<protein>
    <recommendedName>
        <fullName evidence="2">Translation initiation factor IF-2</fullName>
    </recommendedName>
</protein>
<proteinExistence type="inferred from homology"/>
<organism>
    <name type="scientific">Mycolicibacterium gilvum (strain PYR-GCK)</name>
    <name type="common">Mycobacterium gilvum (strain PYR-GCK)</name>
    <dbReference type="NCBI Taxonomy" id="350054"/>
    <lineage>
        <taxon>Bacteria</taxon>
        <taxon>Bacillati</taxon>
        <taxon>Actinomycetota</taxon>
        <taxon>Actinomycetes</taxon>
        <taxon>Mycobacteriales</taxon>
        <taxon>Mycobacteriaceae</taxon>
        <taxon>Mycolicibacterium</taxon>
    </lineage>
</organism>
<comment type="function">
    <text evidence="2">One of the essential components for the initiation of protein synthesis. Protects formylmethionyl-tRNA from spontaneous hydrolysis and promotes its binding to the 30S ribosomal subunits. Also involved in the hydrolysis of GTP during the formation of the 70S ribosomal complex.</text>
</comment>
<comment type="subcellular location">
    <subcellularLocation>
        <location evidence="2">Cytoplasm</location>
    </subcellularLocation>
</comment>
<comment type="similarity">
    <text evidence="2">Belongs to the TRAFAC class translation factor GTPase superfamily. Classic translation factor GTPase family. IF-2 subfamily.</text>
</comment>
<reference key="1">
    <citation type="submission" date="2007-04" db="EMBL/GenBank/DDBJ databases">
        <title>Complete sequence of chromosome of Mycobacterium gilvum PYR-GCK.</title>
        <authorList>
            <consortium name="US DOE Joint Genome Institute"/>
            <person name="Copeland A."/>
            <person name="Lucas S."/>
            <person name="Lapidus A."/>
            <person name="Barry K."/>
            <person name="Detter J.C."/>
            <person name="Glavina del Rio T."/>
            <person name="Hammon N."/>
            <person name="Israni S."/>
            <person name="Dalin E."/>
            <person name="Tice H."/>
            <person name="Pitluck S."/>
            <person name="Chain P."/>
            <person name="Malfatti S."/>
            <person name="Shin M."/>
            <person name="Vergez L."/>
            <person name="Schmutz J."/>
            <person name="Larimer F."/>
            <person name="Land M."/>
            <person name="Hauser L."/>
            <person name="Kyrpides N."/>
            <person name="Mikhailova N."/>
            <person name="Miller C."/>
            <person name="Richardson P."/>
        </authorList>
    </citation>
    <scope>NUCLEOTIDE SEQUENCE [LARGE SCALE GENOMIC DNA]</scope>
    <source>
        <strain>PYR-GCK</strain>
    </source>
</reference>
<gene>
    <name evidence="2" type="primary">infB</name>
    <name type="ordered locus">Mflv_4039</name>
</gene>
<accession>A4TCF8</accession>
<dbReference type="EMBL" id="CP000656">
    <property type="protein sequence ID" value="ABP46509.1"/>
    <property type="molecule type" value="Genomic_DNA"/>
</dbReference>
<dbReference type="SMR" id="A4TCF8"/>
<dbReference type="STRING" id="350054.Mflv_4039"/>
<dbReference type="KEGG" id="mgi:Mflv_4039"/>
<dbReference type="eggNOG" id="COG0481">
    <property type="taxonomic scope" value="Bacteria"/>
</dbReference>
<dbReference type="eggNOG" id="COG0532">
    <property type="taxonomic scope" value="Bacteria"/>
</dbReference>
<dbReference type="HOGENOM" id="CLU_006301_9_2_11"/>
<dbReference type="OrthoDB" id="9811804at2"/>
<dbReference type="GO" id="GO:0005829">
    <property type="term" value="C:cytosol"/>
    <property type="evidence" value="ECO:0007669"/>
    <property type="project" value="TreeGrafter"/>
</dbReference>
<dbReference type="GO" id="GO:0005525">
    <property type="term" value="F:GTP binding"/>
    <property type="evidence" value="ECO:0007669"/>
    <property type="project" value="UniProtKB-KW"/>
</dbReference>
<dbReference type="GO" id="GO:0003924">
    <property type="term" value="F:GTPase activity"/>
    <property type="evidence" value="ECO:0007669"/>
    <property type="project" value="UniProtKB-UniRule"/>
</dbReference>
<dbReference type="GO" id="GO:0003743">
    <property type="term" value="F:translation initiation factor activity"/>
    <property type="evidence" value="ECO:0007669"/>
    <property type="project" value="UniProtKB-UniRule"/>
</dbReference>
<dbReference type="CDD" id="cd01887">
    <property type="entry name" value="IF2_eIF5B"/>
    <property type="match status" value="1"/>
</dbReference>
<dbReference type="CDD" id="cd03702">
    <property type="entry name" value="IF2_mtIF2_II"/>
    <property type="match status" value="1"/>
</dbReference>
<dbReference type="CDD" id="cd03692">
    <property type="entry name" value="mtIF2_IVc"/>
    <property type="match status" value="1"/>
</dbReference>
<dbReference type="FunFam" id="1.10.10.2480:FF:000003">
    <property type="entry name" value="Translation initiation factor IF-2"/>
    <property type="match status" value="1"/>
</dbReference>
<dbReference type="FunFam" id="2.40.30.10:FF:000007">
    <property type="entry name" value="Translation initiation factor IF-2"/>
    <property type="match status" value="1"/>
</dbReference>
<dbReference type="FunFam" id="2.40.30.10:FF:000008">
    <property type="entry name" value="Translation initiation factor IF-2"/>
    <property type="match status" value="1"/>
</dbReference>
<dbReference type="FunFam" id="3.40.50.10050:FF:000001">
    <property type="entry name" value="Translation initiation factor IF-2"/>
    <property type="match status" value="1"/>
</dbReference>
<dbReference type="FunFam" id="3.40.50.300:FF:000019">
    <property type="entry name" value="Translation initiation factor IF-2"/>
    <property type="match status" value="1"/>
</dbReference>
<dbReference type="Gene3D" id="1.10.10.2480">
    <property type="match status" value="1"/>
</dbReference>
<dbReference type="Gene3D" id="3.40.50.300">
    <property type="entry name" value="P-loop containing nucleotide triphosphate hydrolases"/>
    <property type="match status" value="1"/>
</dbReference>
<dbReference type="Gene3D" id="2.40.30.10">
    <property type="entry name" value="Translation factors"/>
    <property type="match status" value="2"/>
</dbReference>
<dbReference type="Gene3D" id="3.40.50.10050">
    <property type="entry name" value="Translation initiation factor IF- 2, domain 3"/>
    <property type="match status" value="1"/>
</dbReference>
<dbReference type="HAMAP" id="MF_00100_B">
    <property type="entry name" value="IF_2_B"/>
    <property type="match status" value="1"/>
</dbReference>
<dbReference type="InterPro" id="IPR053905">
    <property type="entry name" value="EF-G-like_DII"/>
</dbReference>
<dbReference type="InterPro" id="IPR044145">
    <property type="entry name" value="IF2_II"/>
</dbReference>
<dbReference type="InterPro" id="IPR006847">
    <property type="entry name" value="IF2_N"/>
</dbReference>
<dbReference type="InterPro" id="IPR027417">
    <property type="entry name" value="P-loop_NTPase"/>
</dbReference>
<dbReference type="InterPro" id="IPR005225">
    <property type="entry name" value="Small_GTP-bd"/>
</dbReference>
<dbReference type="InterPro" id="IPR000795">
    <property type="entry name" value="T_Tr_GTP-bd_dom"/>
</dbReference>
<dbReference type="InterPro" id="IPR000178">
    <property type="entry name" value="TF_IF2_bacterial-like"/>
</dbReference>
<dbReference type="InterPro" id="IPR015760">
    <property type="entry name" value="TIF_IF2"/>
</dbReference>
<dbReference type="InterPro" id="IPR023115">
    <property type="entry name" value="TIF_IF2_dom3"/>
</dbReference>
<dbReference type="InterPro" id="IPR036925">
    <property type="entry name" value="TIF_IF2_dom3_sf"/>
</dbReference>
<dbReference type="InterPro" id="IPR009000">
    <property type="entry name" value="Transl_B-barrel_sf"/>
</dbReference>
<dbReference type="NCBIfam" id="TIGR00487">
    <property type="entry name" value="IF-2"/>
    <property type="match status" value="1"/>
</dbReference>
<dbReference type="NCBIfam" id="TIGR00231">
    <property type="entry name" value="small_GTP"/>
    <property type="match status" value="1"/>
</dbReference>
<dbReference type="PANTHER" id="PTHR43381:SF5">
    <property type="entry name" value="TR-TYPE G DOMAIN-CONTAINING PROTEIN"/>
    <property type="match status" value="1"/>
</dbReference>
<dbReference type="PANTHER" id="PTHR43381">
    <property type="entry name" value="TRANSLATION INITIATION FACTOR IF-2-RELATED"/>
    <property type="match status" value="1"/>
</dbReference>
<dbReference type="Pfam" id="PF22042">
    <property type="entry name" value="EF-G_D2"/>
    <property type="match status" value="1"/>
</dbReference>
<dbReference type="Pfam" id="PF00009">
    <property type="entry name" value="GTP_EFTU"/>
    <property type="match status" value="1"/>
</dbReference>
<dbReference type="Pfam" id="PF11987">
    <property type="entry name" value="IF-2"/>
    <property type="match status" value="1"/>
</dbReference>
<dbReference type="Pfam" id="PF04760">
    <property type="entry name" value="IF2_N"/>
    <property type="match status" value="2"/>
</dbReference>
<dbReference type="PRINTS" id="PR00315">
    <property type="entry name" value="ELONGATNFCT"/>
</dbReference>
<dbReference type="SUPFAM" id="SSF52156">
    <property type="entry name" value="Initiation factor IF2/eIF5b, domain 3"/>
    <property type="match status" value="1"/>
</dbReference>
<dbReference type="SUPFAM" id="SSF52540">
    <property type="entry name" value="P-loop containing nucleoside triphosphate hydrolases"/>
    <property type="match status" value="1"/>
</dbReference>
<dbReference type="SUPFAM" id="SSF50447">
    <property type="entry name" value="Translation proteins"/>
    <property type="match status" value="2"/>
</dbReference>
<dbReference type="PROSITE" id="PS51722">
    <property type="entry name" value="G_TR_2"/>
    <property type="match status" value="1"/>
</dbReference>
<dbReference type="PROSITE" id="PS01176">
    <property type="entry name" value="IF2"/>
    <property type="match status" value="1"/>
</dbReference>
<sequence>MAGKARVHELAKELGVTSKEVLARLGEQGEFVKSASSTVEAPVARRLRESFGGNKPDAVKPAAGASNGAPAKPSAPGARPGPRPGPPAPAQPKEPPAPAAPAAAAPAPAAPAPPAAPPAPAASAAPPSAPEAPSARPTPGPRPGPGGPKPGAPKPAPRTPRVGNNPFSSQQPVERPAPRPQGPAGPGGPRPGPGAGGPRPGGGPRPGATPGNMPPRPVGGPRPGGGPRPGGGPRPGAGPRPTPGGAGRPGGGGGGNYRGGGAGGGGGAGGAAAGGFRGRPGGGGGRPGQRGGAAGAFGRPGGAPKRGRKSKRAKRAEYENMQAPVVGGVRLPHGNGETIRLARGASLSDFADKINANPASLVQALFNLGEMVTATQSVNDETLELLGGEMNYVVQVVSPEDEDRELLQSFDLSYGEDEGGEDDLEFRPPVVTVMGHVDHGKTRLLDTIRDATVREGEAGGITQHIGAYQVTVDLDGNERPITFIDTPGHEAFTAMRARGAKATDIAILVVAADDGVMPQTVEAVNHAQAADVPIVVAVNKIDKEGADPAKIRGQLTEYGLVPEEYGGDTMFVDISAKAGTNIEALLEAVVLTADASLDLRANPDMEAQGVAIEAHLDRGRGPVATVLIQRGTLRVGDSVVAGDAYGRVRRMVDEHGEDVEEALPSRPVQVIGFTSVPGAGDNFLVVDEDRIARQIADRRSARKRNALAARTRKRISLEDLDSALKETSQLNLILKGDNSGTVEALEEALLGIQVDDEVQLRVIDRGVGGVTETNVNLASASDAIIIGFNVRAEGKATELANREGVEIRYYSIIYQAIDEIESALKGMLKPIYEEKELGRAEIRAIFRSSKVGNIAGCLVQSGIMRRNAKARLLRDNVVVAQNLTVSSLKREKDDATEVREGYECGLTLTYNDIKEGDVIETYELVEKART</sequence>
<feature type="chain" id="PRO_1000075609" description="Translation initiation factor IF-2">
    <location>
        <begin position="1"/>
        <end position="930"/>
    </location>
</feature>
<feature type="domain" description="tr-type G">
    <location>
        <begin position="426"/>
        <end position="598"/>
    </location>
</feature>
<feature type="region of interest" description="Disordered" evidence="3">
    <location>
        <begin position="31"/>
        <end position="317"/>
    </location>
</feature>
<feature type="region of interest" description="G1" evidence="1">
    <location>
        <begin position="435"/>
        <end position="442"/>
    </location>
</feature>
<feature type="region of interest" description="G2" evidence="1">
    <location>
        <begin position="460"/>
        <end position="464"/>
    </location>
</feature>
<feature type="region of interest" description="G3" evidence="1">
    <location>
        <begin position="485"/>
        <end position="488"/>
    </location>
</feature>
<feature type="region of interest" description="G4" evidence="1">
    <location>
        <begin position="539"/>
        <end position="542"/>
    </location>
</feature>
<feature type="region of interest" description="G5" evidence="1">
    <location>
        <begin position="575"/>
        <end position="577"/>
    </location>
</feature>
<feature type="compositionally biased region" description="Low complexity" evidence="3">
    <location>
        <begin position="61"/>
        <end position="78"/>
    </location>
</feature>
<feature type="compositionally biased region" description="Pro residues" evidence="3">
    <location>
        <begin position="79"/>
        <end position="99"/>
    </location>
</feature>
<feature type="compositionally biased region" description="Pro residues" evidence="3">
    <location>
        <begin position="108"/>
        <end position="120"/>
    </location>
</feature>
<feature type="compositionally biased region" description="Low complexity" evidence="3">
    <location>
        <begin position="121"/>
        <end position="135"/>
    </location>
</feature>
<feature type="compositionally biased region" description="Pro residues" evidence="3">
    <location>
        <begin position="136"/>
        <end position="158"/>
    </location>
</feature>
<feature type="compositionally biased region" description="Pro residues" evidence="3">
    <location>
        <begin position="178"/>
        <end position="192"/>
    </location>
</feature>
<feature type="compositionally biased region" description="Gly residues" evidence="3">
    <location>
        <begin position="193"/>
        <end position="205"/>
    </location>
</feature>
<feature type="compositionally biased region" description="Pro residues" evidence="3">
    <location>
        <begin position="212"/>
        <end position="242"/>
    </location>
</feature>
<feature type="compositionally biased region" description="Gly residues" evidence="3">
    <location>
        <begin position="244"/>
        <end position="301"/>
    </location>
</feature>
<feature type="compositionally biased region" description="Basic residues" evidence="3">
    <location>
        <begin position="305"/>
        <end position="314"/>
    </location>
</feature>
<feature type="binding site" evidence="2">
    <location>
        <begin position="435"/>
        <end position="442"/>
    </location>
    <ligand>
        <name>GTP</name>
        <dbReference type="ChEBI" id="CHEBI:37565"/>
    </ligand>
</feature>
<feature type="binding site" evidence="2">
    <location>
        <begin position="485"/>
        <end position="489"/>
    </location>
    <ligand>
        <name>GTP</name>
        <dbReference type="ChEBI" id="CHEBI:37565"/>
    </ligand>
</feature>
<feature type="binding site" evidence="2">
    <location>
        <begin position="539"/>
        <end position="542"/>
    </location>
    <ligand>
        <name>GTP</name>
        <dbReference type="ChEBI" id="CHEBI:37565"/>
    </ligand>
</feature>
<keyword id="KW-0963">Cytoplasm</keyword>
<keyword id="KW-0342">GTP-binding</keyword>
<keyword id="KW-0396">Initiation factor</keyword>
<keyword id="KW-0547">Nucleotide-binding</keyword>
<keyword id="KW-0648">Protein biosynthesis</keyword>